<evidence type="ECO:0000255" key="1">
    <source>
        <dbReference type="HAMAP-Rule" id="MF_00041"/>
    </source>
</evidence>
<dbReference type="EC" id="6.1.1.16" evidence="1"/>
<dbReference type="EMBL" id="CP001175">
    <property type="protein sequence ID" value="ACK40737.1"/>
    <property type="molecule type" value="Genomic_DNA"/>
</dbReference>
<dbReference type="RefSeq" id="WP_003724083.1">
    <property type="nucleotide sequence ID" value="NC_011660.1"/>
</dbReference>
<dbReference type="SMR" id="B8DF15"/>
<dbReference type="KEGG" id="lmh:LMHCC_2400"/>
<dbReference type="HOGENOM" id="CLU_013528_0_1_9"/>
<dbReference type="GO" id="GO:0005829">
    <property type="term" value="C:cytosol"/>
    <property type="evidence" value="ECO:0007669"/>
    <property type="project" value="TreeGrafter"/>
</dbReference>
<dbReference type="GO" id="GO:0005524">
    <property type="term" value="F:ATP binding"/>
    <property type="evidence" value="ECO:0007669"/>
    <property type="project" value="UniProtKB-UniRule"/>
</dbReference>
<dbReference type="GO" id="GO:0004817">
    <property type="term" value="F:cysteine-tRNA ligase activity"/>
    <property type="evidence" value="ECO:0007669"/>
    <property type="project" value="UniProtKB-UniRule"/>
</dbReference>
<dbReference type="GO" id="GO:0008270">
    <property type="term" value="F:zinc ion binding"/>
    <property type="evidence" value="ECO:0007669"/>
    <property type="project" value="UniProtKB-UniRule"/>
</dbReference>
<dbReference type="GO" id="GO:0006423">
    <property type="term" value="P:cysteinyl-tRNA aminoacylation"/>
    <property type="evidence" value="ECO:0007669"/>
    <property type="project" value="UniProtKB-UniRule"/>
</dbReference>
<dbReference type="CDD" id="cd00672">
    <property type="entry name" value="CysRS_core"/>
    <property type="match status" value="1"/>
</dbReference>
<dbReference type="FunFam" id="1.20.120.1910:FF:000002">
    <property type="entry name" value="Cysteine--tRNA ligase"/>
    <property type="match status" value="1"/>
</dbReference>
<dbReference type="FunFam" id="3.40.50.620:FF:000009">
    <property type="entry name" value="Cysteine--tRNA ligase"/>
    <property type="match status" value="1"/>
</dbReference>
<dbReference type="Gene3D" id="1.20.120.1910">
    <property type="entry name" value="Cysteine-tRNA ligase, C-terminal anti-codon recognition domain"/>
    <property type="match status" value="1"/>
</dbReference>
<dbReference type="Gene3D" id="3.40.50.620">
    <property type="entry name" value="HUPs"/>
    <property type="match status" value="1"/>
</dbReference>
<dbReference type="HAMAP" id="MF_00041">
    <property type="entry name" value="Cys_tRNA_synth"/>
    <property type="match status" value="1"/>
</dbReference>
<dbReference type="InterPro" id="IPR015803">
    <property type="entry name" value="Cys-tRNA-ligase"/>
</dbReference>
<dbReference type="InterPro" id="IPR015273">
    <property type="entry name" value="Cys-tRNA-synt_Ia_DALR"/>
</dbReference>
<dbReference type="InterPro" id="IPR024909">
    <property type="entry name" value="Cys-tRNA/MSH_ligase"/>
</dbReference>
<dbReference type="InterPro" id="IPR014729">
    <property type="entry name" value="Rossmann-like_a/b/a_fold"/>
</dbReference>
<dbReference type="InterPro" id="IPR032678">
    <property type="entry name" value="tRNA-synt_1_cat_dom"/>
</dbReference>
<dbReference type="InterPro" id="IPR009080">
    <property type="entry name" value="tRNAsynth_Ia_anticodon-bd"/>
</dbReference>
<dbReference type="NCBIfam" id="TIGR00435">
    <property type="entry name" value="cysS"/>
    <property type="match status" value="1"/>
</dbReference>
<dbReference type="PANTHER" id="PTHR10890:SF3">
    <property type="entry name" value="CYSTEINE--TRNA LIGASE, CYTOPLASMIC"/>
    <property type="match status" value="1"/>
</dbReference>
<dbReference type="PANTHER" id="PTHR10890">
    <property type="entry name" value="CYSTEINYL-TRNA SYNTHETASE"/>
    <property type="match status" value="1"/>
</dbReference>
<dbReference type="Pfam" id="PF09190">
    <property type="entry name" value="DALR_2"/>
    <property type="match status" value="1"/>
</dbReference>
<dbReference type="Pfam" id="PF01406">
    <property type="entry name" value="tRNA-synt_1e"/>
    <property type="match status" value="1"/>
</dbReference>
<dbReference type="PRINTS" id="PR00983">
    <property type="entry name" value="TRNASYNTHCYS"/>
</dbReference>
<dbReference type="SMART" id="SM00840">
    <property type="entry name" value="DALR_2"/>
    <property type="match status" value="1"/>
</dbReference>
<dbReference type="SUPFAM" id="SSF47323">
    <property type="entry name" value="Anticodon-binding domain of a subclass of class I aminoacyl-tRNA synthetases"/>
    <property type="match status" value="1"/>
</dbReference>
<dbReference type="SUPFAM" id="SSF52374">
    <property type="entry name" value="Nucleotidylyl transferase"/>
    <property type="match status" value="1"/>
</dbReference>
<organism>
    <name type="scientific">Listeria monocytogenes serotype 4a (strain HCC23)</name>
    <dbReference type="NCBI Taxonomy" id="552536"/>
    <lineage>
        <taxon>Bacteria</taxon>
        <taxon>Bacillati</taxon>
        <taxon>Bacillota</taxon>
        <taxon>Bacilli</taxon>
        <taxon>Bacillales</taxon>
        <taxon>Listeriaceae</taxon>
        <taxon>Listeria</taxon>
    </lineage>
</organism>
<name>SYC_LISMH</name>
<feature type="chain" id="PRO_1000199076" description="Cysteine--tRNA ligase">
    <location>
        <begin position="1"/>
        <end position="471"/>
    </location>
</feature>
<feature type="short sequence motif" description="'HIGH' region">
    <location>
        <begin position="31"/>
        <end position="41"/>
    </location>
</feature>
<feature type="short sequence motif" description="'KMSKS' region">
    <location>
        <begin position="266"/>
        <end position="270"/>
    </location>
</feature>
<feature type="binding site" evidence="1">
    <location>
        <position position="29"/>
    </location>
    <ligand>
        <name>Zn(2+)</name>
        <dbReference type="ChEBI" id="CHEBI:29105"/>
    </ligand>
</feature>
<feature type="binding site" evidence="1">
    <location>
        <position position="209"/>
    </location>
    <ligand>
        <name>Zn(2+)</name>
        <dbReference type="ChEBI" id="CHEBI:29105"/>
    </ligand>
</feature>
<feature type="binding site" evidence="1">
    <location>
        <position position="234"/>
    </location>
    <ligand>
        <name>Zn(2+)</name>
        <dbReference type="ChEBI" id="CHEBI:29105"/>
    </ligand>
</feature>
<feature type="binding site" evidence="1">
    <location>
        <position position="238"/>
    </location>
    <ligand>
        <name>Zn(2+)</name>
        <dbReference type="ChEBI" id="CHEBI:29105"/>
    </ligand>
</feature>
<feature type="binding site" evidence="1">
    <location>
        <position position="269"/>
    </location>
    <ligand>
        <name>ATP</name>
        <dbReference type="ChEBI" id="CHEBI:30616"/>
    </ligand>
</feature>
<comment type="catalytic activity">
    <reaction evidence="1">
        <text>tRNA(Cys) + L-cysteine + ATP = L-cysteinyl-tRNA(Cys) + AMP + diphosphate</text>
        <dbReference type="Rhea" id="RHEA:17773"/>
        <dbReference type="Rhea" id="RHEA-COMP:9661"/>
        <dbReference type="Rhea" id="RHEA-COMP:9679"/>
        <dbReference type="ChEBI" id="CHEBI:30616"/>
        <dbReference type="ChEBI" id="CHEBI:33019"/>
        <dbReference type="ChEBI" id="CHEBI:35235"/>
        <dbReference type="ChEBI" id="CHEBI:78442"/>
        <dbReference type="ChEBI" id="CHEBI:78517"/>
        <dbReference type="ChEBI" id="CHEBI:456215"/>
        <dbReference type="EC" id="6.1.1.16"/>
    </reaction>
</comment>
<comment type="cofactor">
    <cofactor evidence="1">
        <name>Zn(2+)</name>
        <dbReference type="ChEBI" id="CHEBI:29105"/>
    </cofactor>
    <text evidence="1">Binds 1 zinc ion per subunit.</text>
</comment>
<comment type="subunit">
    <text evidence="1">Monomer.</text>
</comment>
<comment type="subcellular location">
    <subcellularLocation>
        <location evidence="1">Cytoplasm</location>
    </subcellularLocation>
</comment>
<comment type="similarity">
    <text evidence="1">Belongs to the class-I aminoacyl-tRNA synthetase family.</text>
</comment>
<protein>
    <recommendedName>
        <fullName evidence="1">Cysteine--tRNA ligase</fullName>
        <ecNumber evidence="1">6.1.1.16</ecNumber>
    </recommendedName>
    <alternativeName>
        <fullName evidence="1">Cysteinyl-tRNA synthetase</fullName>
        <shortName evidence="1">CysRS</shortName>
    </alternativeName>
</protein>
<gene>
    <name evidence="1" type="primary">cysS</name>
    <name type="ordered locus">LMHCC_2400</name>
</gene>
<accession>B8DF15</accession>
<reference key="1">
    <citation type="journal article" date="2011" name="J. Bacteriol.">
        <title>Genome sequence of lineage III Listeria monocytogenes strain HCC23.</title>
        <authorList>
            <person name="Steele C.L."/>
            <person name="Donaldson J.R."/>
            <person name="Paul D."/>
            <person name="Banes M.M."/>
            <person name="Arick T."/>
            <person name="Bridges S.M."/>
            <person name="Lawrence M.L."/>
        </authorList>
    </citation>
    <scope>NUCLEOTIDE SEQUENCE [LARGE SCALE GENOMIC DNA]</scope>
    <source>
        <strain>HCC23</strain>
    </source>
</reference>
<sequence>MSIQIFNTLKREKEPFKPLKDGEVKMYVCGPTVYNYIHIGNARPIIVFDTVRRYFTYRGYDVKFVSNFTDVDDKLIRAANELKLTVPEVADRFIGAYFDDVDQLNVAKATVNPRVTENMDEIIQLISTLIEKGYAYESAGDVYFRTKKFKDYGKLSGQELSELQHGARVEYNERKQDELDFTLWKAAKPGEIFWESPFGNGRPGWHIECSALAKKYLGDTIDIHAGGQDLVFPHHEDEIAQSEAATGKTFANYWMHNAFLNIDGEKMSKSLGNFITLHDVLKDNDPNVIRFFMLSVHYRKPITLNDAILEDAKNGLERLMIAYQNIDHRIQTDDGEYVEEAHEDEWLEQLTELKQAFEDDMDDDFNTANAITTFHELAKRANIYLAKETVSINVLREFLSMMRLFAEVLGLKLENTQTDSLDDSEVEALIEERLQARNERNFARADEIRDILKEKNIILEDTAQGTRFRRG</sequence>
<proteinExistence type="inferred from homology"/>
<keyword id="KW-0030">Aminoacyl-tRNA synthetase</keyword>
<keyword id="KW-0067">ATP-binding</keyword>
<keyword id="KW-0963">Cytoplasm</keyword>
<keyword id="KW-0436">Ligase</keyword>
<keyword id="KW-0479">Metal-binding</keyword>
<keyword id="KW-0547">Nucleotide-binding</keyword>
<keyword id="KW-0648">Protein biosynthesis</keyword>
<keyword id="KW-0862">Zinc</keyword>